<sequence length="862" mass="99428">MAQPGPAPQPDVSLQQRVAELEKINAEFLRAQQQLEQEFNQKRAKFKELYLAKEEDLKRQNAVLQAAQDDLGHLRTQLWEAQAEMENIKAIATVSENTKQEAIDEVKRQWREEVASLQAVMKETVRDYEHQFHLRLEQERAQWAQYRESADREIADLRRRLSEGQEEENLENEMKKAQEDAEKLRSVVMPMEKEIAALKDKLTEAEDKIKELEASKVKELNHYLEAEKSCRTDLEMYVAVLNTQKSVLQEDAEKLRKELHEVCHLLEQERQQHNQLKHTWQKANDQFLESQRLLMRDMQRMEIVLTSEQLRQVEELKKKDQEEDEQQRINKGKDNKKIDTEEEVKIPVVCALTQEESSTPLSNEEEHLDSTHGSVHSLDADLLLPSGDPFSKSDNDMFKEGLRRAQSTDSLGTSSSLQSKALGYNYKAKSAGNLDESDFGPLVGADSVSENFDTVSLGSLQMPSGFMLTKDQERAIKAMTPEQEETASLLSSVTQGMESAYVSPSGYRLVSETEWNLLQKEVHNAGNKLGRRCDMCSNYEKQLQGIQIQEAETRDQVKKLQLMLRQANDQLEKTMKEKQELEDFLRQSAEDSSHQISALVLRAQASEVLLEELQQSFSQAKRDVQEQMAVLMQSREQVSEELVRLQKDNDSLQGKHSLHVSLQLAEDFILPDTVQVLRELVLKYRENIVHVRTAADHMEEKLKAEILFLKEQIQAEQCLKENLEETLQLEIENCKEEIASISSLKAELERIKVEKGQLESTLREKSQQLESLQEIKVNLEEQLKKETAAKATVEQLMFEEKNKAQRLQTELDVSEQVQRDFVKLSQTLQVQLERIRQADSLERIRAILNDTKLTDINQLPET</sequence>
<proteinExistence type="evidence at protein level"/>
<keyword id="KW-0007">Acetylation</keyword>
<keyword id="KW-0053">Apoptosis</keyword>
<keyword id="KW-0175">Coiled coil</keyword>
<keyword id="KW-0963">Cytoplasm</keyword>
<keyword id="KW-0968">Cytoplasmic vesicle</keyword>
<keyword id="KW-0903">Direct protein sequencing</keyword>
<keyword id="KW-0254">Endocytosis</keyword>
<keyword id="KW-0967">Endosome</keyword>
<keyword id="KW-0597">Phosphoprotein</keyword>
<keyword id="KW-0653">Protein transport</keyword>
<keyword id="KW-1185">Reference proteome</keyword>
<keyword id="KW-0813">Transport</keyword>
<protein>
    <recommendedName>
        <fullName>Rab GTPase-binding effector protein 1</fullName>
    </recommendedName>
    <alternativeName>
        <fullName>Rabaptin-5</fullName>
    </alternativeName>
    <alternativeName>
        <fullName>Rabaptin-5alpha</fullName>
    </alternativeName>
</protein>
<accession>O35550</accession>
<accession>P70609</accession>
<reference key="1">
    <citation type="submission" date="1996-06" db="EMBL/GenBank/DDBJ databases">
        <authorList>
            <person name="Fujimoto H."/>
            <person name="Uyeda A."/>
            <person name="Nishimune H."/>
            <person name="Taguchi T."/>
        </authorList>
    </citation>
    <scope>NUCLEOTIDE SEQUENCE [MRNA]</scope>
    <source>
        <strain>Sprague-Dawley</strain>
        <tissue>Brain</tissue>
    </source>
</reference>
<reference key="2">
    <citation type="submission" date="1996-09" db="EMBL/GenBank/DDBJ databases">
        <authorList>
            <person name="Wang Y."/>
            <person name="Suedhof T.C."/>
        </authorList>
    </citation>
    <scope>NUCLEOTIDE SEQUENCE [MRNA]</scope>
    <source>
        <tissue>Brain</tissue>
    </source>
</reference>
<reference key="3">
    <citation type="submission" date="2007-04" db="UniProtKB">
        <authorList>
            <person name="Lubec G."/>
            <person name="Diao W."/>
        </authorList>
    </citation>
    <scope>PROTEIN SEQUENCE OF 60-75; 301-311 AND 587-602</scope>
    <scope>IDENTIFICATION BY MASS SPECTROMETRY</scope>
    <source>
        <strain>Sprague-Dawley</strain>
        <tissue>Hippocampus</tissue>
    </source>
</reference>
<reference key="4">
    <citation type="journal article" date="2012" name="FEBS Lett.">
        <title>Physical and functional interaction of KV10.1 with Rabaptin-5 impacts ion channel trafficking.</title>
        <authorList>
            <person name="Ninkovic M."/>
            <person name="Mitkovski M."/>
            <person name="Kohl T."/>
            <person name="Stuhmer W."/>
            <person name="Pardo L.A."/>
        </authorList>
    </citation>
    <scope>INTERACTION WITH KCNH1</scope>
</reference>
<reference key="5">
    <citation type="journal article" date="2012" name="Nat. Commun.">
        <title>Quantitative maps of protein phosphorylation sites across 14 different rat organs and tissues.</title>
        <authorList>
            <person name="Lundby A."/>
            <person name="Secher A."/>
            <person name="Lage K."/>
            <person name="Nordsborg N.B."/>
            <person name="Dmytriyev A."/>
            <person name="Lundby C."/>
            <person name="Olsen J.V."/>
        </authorList>
    </citation>
    <scope>PHOSPHORYLATION [LARGE SCALE ANALYSIS] AT SER-407 AND SER-410</scope>
    <scope>IDENTIFICATION BY MASS SPECTROMETRY [LARGE SCALE ANALYSIS]</scope>
</reference>
<feature type="initiator methionine" description="Removed" evidence="3">
    <location>
        <position position="1"/>
    </location>
</feature>
<feature type="chain" id="PRO_0000187558" description="Rab GTPase-binding effector protein 1">
    <location>
        <begin position="2"/>
        <end position="862"/>
    </location>
</feature>
<feature type="region of interest" description="Disordered" evidence="5">
    <location>
        <begin position="315"/>
        <end position="340"/>
    </location>
</feature>
<feature type="region of interest" description="Disordered" evidence="5">
    <location>
        <begin position="355"/>
        <end position="374"/>
    </location>
</feature>
<feature type="coiled-coil region" evidence="4">
    <location>
        <begin position="11"/>
        <end position="328"/>
    </location>
</feature>
<feature type="coiled-coil region" evidence="4">
    <location>
        <begin position="534"/>
        <end position="816"/>
    </location>
</feature>
<feature type="modified residue" description="N-acetylalanine" evidence="3">
    <location>
        <position position="2"/>
    </location>
</feature>
<feature type="modified residue" description="N6-acetyllysine" evidence="3">
    <location>
        <position position="282"/>
    </location>
</feature>
<feature type="modified residue" description="Phosphoserine" evidence="3">
    <location>
        <position position="374"/>
    </location>
</feature>
<feature type="modified residue" description="Phosphoserine" evidence="3">
    <location>
        <position position="377"/>
    </location>
</feature>
<feature type="modified residue" description="Phosphoserine" evidence="8">
    <location>
        <position position="407"/>
    </location>
</feature>
<feature type="modified residue" description="Phosphothreonine" evidence="3">
    <location>
        <position position="408"/>
    </location>
</feature>
<feature type="modified residue" description="Phosphoserine" evidence="8">
    <location>
        <position position="410"/>
    </location>
</feature>
<feature type="sequence conflict" description="In Ref. 2; AAB47746." evidence="7" ref="2">
    <original>W</original>
    <variation>S</variation>
    <location>
        <position position="79"/>
    </location>
</feature>
<feature type="sequence conflict" description="In Ref. 2; AAB47746." evidence="7" ref="2">
    <original>E</original>
    <variation>D</variation>
    <location>
        <position position="84"/>
    </location>
</feature>
<feature type="sequence conflict" description="In Ref. 2; AAB47746." evidence="7" ref="2">
    <original>G</original>
    <variation>E</variation>
    <location>
        <position position="458"/>
    </location>
</feature>
<dbReference type="EMBL" id="D85844">
    <property type="protein sequence ID" value="BAA21782.1"/>
    <property type="molecule type" value="mRNA"/>
</dbReference>
<dbReference type="EMBL" id="U70777">
    <property type="protein sequence ID" value="AAB47746.1"/>
    <property type="molecule type" value="mRNA"/>
</dbReference>
<dbReference type="RefSeq" id="NP_061997.1">
    <property type="nucleotide sequence ID" value="NM_019124.1"/>
</dbReference>
<dbReference type="SMR" id="O35550"/>
<dbReference type="BioGRID" id="248445">
    <property type="interactions" value="2"/>
</dbReference>
<dbReference type="ELM" id="O35550"/>
<dbReference type="FunCoup" id="O35550">
    <property type="interactions" value="2923"/>
</dbReference>
<dbReference type="IntAct" id="O35550">
    <property type="interactions" value="2"/>
</dbReference>
<dbReference type="MINT" id="O35550"/>
<dbReference type="STRING" id="10116.ENSRNOP00000050017"/>
<dbReference type="iPTMnet" id="O35550"/>
<dbReference type="PhosphoSitePlus" id="O35550"/>
<dbReference type="PaxDb" id="10116-ENSRNOP00000050017"/>
<dbReference type="GeneID" id="54190"/>
<dbReference type="KEGG" id="rno:54190"/>
<dbReference type="UCSC" id="RGD:708568">
    <property type="organism name" value="rat"/>
</dbReference>
<dbReference type="AGR" id="RGD:708568"/>
<dbReference type="CTD" id="9135"/>
<dbReference type="RGD" id="708568">
    <property type="gene designation" value="Rabep1"/>
</dbReference>
<dbReference type="eggNOG" id="KOG0993">
    <property type="taxonomic scope" value="Eukaryota"/>
</dbReference>
<dbReference type="InParanoid" id="O35550"/>
<dbReference type="PhylomeDB" id="O35550"/>
<dbReference type="PRO" id="PR:O35550"/>
<dbReference type="Proteomes" id="UP000002494">
    <property type="component" value="Unplaced"/>
</dbReference>
<dbReference type="GO" id="GO:0005769">
    <property type="term" value="C:early endosome"/>
    <property type="evidence" value="ECO:0007669"/>
    <property type="project" value="UniProtKB-SubCell"/>
</dbReference>
<dbReference type="GO" id="GO:0030139">
    <property type="term" value="C:endocytic vesicle"/>
    <property type="evidence" value="ECO:0000250"/>
    <property type="project" value="UniProtKB"/>
</dbReference>
<dbReference type="GO" id="GO:0005768">
    <property type="term" value="C:endosome"/>
    <property type="evidence" value="ECO:0000250"/>
    <property type="project" value="UniProtKB"/>
</dbReference>
<dbReference type="GO" id="GO:0098978">
    <property type="term" value="C:glutamatergic synapse"/>
    <property type="evidence" value="ECO:0000266"/>
    <property type="project" value="RGD"/>
</dbReference>
<dbReference type="GO" id="GO:0099523">
    <property type="term" value="C:presynaptic cytosol"/>
    <property type="evidence" value="ECO:0000314"/>
    <property type="project" value="SynGO"/>
</dbReference>
<dbReference type="GO" id="GO:0032991">
    <property type="term" value="C:protein-containing complex"/>
    <property type="evidence" value="ECO:0000266"/>
    <property type="project" value="RGD"/>
</dbReference>
<dbReference type="GO" id="GO:0055037">
    <property type="term" value="C:recycling endosome"/>
    <property type="evidence" value="ECO:0007669"/>
    <property type="project" value="UniProtKB-SubCell"/>
</dbReference>
<dbReference type="GO" id="GO:0008083">
    <property type="term" value="F:growth factor activity"/>
    <property type="evidence" value="ECO:0007669"/>
    <property type="project" value="InterPro"/>
</dbReference>
<dbReference type="GO" id="GO:0005096">
    <property type="term" value="F:GTPase activator activity"/>
    <property type="evidence" value="ECO:0007669"/>
    <property type="project" value="InterPro"/>
</dbReference>
<dbReference type="GO" id="GO:0019904">
    <property type="term" value="F:protein domain specific binding"/>
    <property type="evidence" value="ECO:0000266"/>
    <property type="project" value="RGD"/>
</dbReference>
<dbReference type="GO" id="GO:0042803">
    <property type="term" value="F:protein homodimerization activity"/>
    <property type="evidence" value="ECO:0000266"/>
    <property type="project" value="RGD"/>
</dbReference>
<dbReference type="GO" id="GO:0006915">
    <property type="term" value="P:apoptotic process"/>
    <property type="evidence" value="ECO:0007669"/>
    <property type="project" value="UniProtKB-KW"/>
</dbReference>
<dbReference type="GO" id="GO:0006897">
    <property type="term" value="P:endocytosis"/>
    <property type="evidence" value="ECO:0007669"/>
    <property type="project" value="UniProtKB-KW"/>
</dbReference>
<dbReference type="GO" id="GO:0006893">
    <property type="term" value="P:Golgi to plasma membrane transport"/>
    <property type="evidence" value="ECO:0000250"/>
    <property type="project" value="UniProtKB"/>
</dbReference>
<dbReference type="GO" id="GO:1903441">
    <property type="term" value="P:protein localization to ciliary membrane"/>
    <property type="evidence" value="ECO:0000250"/>
    <property type="project" value="UniProtKB"/>
</dbReference>
<dbReference type="GO" id="GO:0015031">
    <property type="term" value="P:protein transport"/>
    <property type="evidence" value="ECO:0007669"/>
    <property type="project" value="UniProtKB-KW"/>
</dbReference>
<dbReference type="GO" id="GO:0099149">
    <property type="term" value="P:regulation of postsynaptic neurotransmitter receptor internalization"/>
    <property type="evidence" value="ECO:0000266"/>
    <property type="project" value="RGD"/>
</dbReference>
<dbReference type="GO" id="GO:0016192">
    <property type="term" value="P:vesicle-mediated transport"/>
    <property type="evidence" value="ECO:0000250"/>
    <property type="project" value="UniProtKB"/>
</dbReference>
<dbReference type="FunFam" id="1.20.5.340:FF:000022">
    <property type="entry name" value="Rabaptin, RAB GTPase-binding effector protein 1"/>
    <property type="match status" value="1"/>
</dbReference>
<dbReference type="FunFam" id="1.20.5.730:FF:000002">
    <property type="entry name" value="Rabaptin, RAB GTPase-binding effector protein 1"/>
    <property type="match status" value="1"/>
</dbReference>
<dbReference type="Gene3D" id="1.20.5.340">
    <property type="match status" value="1"/>
</dbReference>
<dbReference type="Gene3D" id="1.20.5.730">
    <property type="entry name" value="Single helix bin"/>
    <property type="match status" value="1"/>
</dbReference>
<dbReference type="InterPro" id="IPR003914">
    <property type="entry name" value="Rabaptin"/>
</dbReference>
<dbReference type="InterPro" id="IPR018514">
    <property type="entry name" value="Rabaptin_coiled-coil"/>
</dbReference>
<dbReference type="InterPro" id="IPR015390">
    <property type="entry name" value="Rabaptin_Rab5-bd_dom"/>
</dbReference>
<dbReference type="PANTHER" id="PTHR31179">
    <property type="entry name" value="RAB GTPASE-BINDING EFFECTOR PROTEIN"/>
    <property type="match status" value="1"/>
</dbReference>
<dbReference type="PANTHER" id="PTHR31179:SF5">
    <property type="entry name" value="RAB GTPASE-BINDING EFFECTOR PROTEIN 1"/>
    <property type="match status" value="1"/>
</dbReference>
<dbReference type="Pfam" id="PF09311">
    <property type="entry name" value="Rab5-bind"/>
    <property type="match status" value="1"/>
</dbReference>
<dbReference type="Pfam" id="PF03528">
    <property type="entry name" value="Rabaptin"/>
    <property type="match status" value="1"/>
</dbReference>
<dbReference type="PRINTS" id="PR01432">
    <property type="entry name" value="RABAPTIN"/>
</dbReference>
<dbReference type="SUPFAM" id="SSF103652">
    <property type="entry name" value="G protein-binding domain"/>
    <property type="match status" value="2"/>
</dbReference>
<gene>
    <name type="primary">Rabep1</name>
    <name type="synonym">Rabpt5</name>
    <name type="synonym">Rabpt5a</name>
</gene>
<evidence type="ECO:0000250" key="1"/>
<evidence type="ECO:0000250" key="2">
    <source>
        <dbReference type="UniProtKB" id="O35551"/>
    </source>
</evidence>
<evidence type="ECO:0000250" key="3">
    <source>
        <dbReference type="UniProtKB" id="Q15276"/>
    </source>
</evidence>
<evidence type="ECO:0000255" key="4"/>
<evidence type="ECO:0000256" key="5">
    <source>
        <dbReference type="SAM" id="MobiDB-lite"/>
    </source>
</evidence>
<evidence type="ECO:0000269" key="6">
    <source>
    </source>
</evidence>
<evidence type="ECO:0000305" key="7"/>
<evidence type="ECO:0007744" key="8">
    <source>
    </source>
</evidence>
<comment type="function">
    <text evidence="2 3">Rab effector protein acting as linker between gamma-adaptin, RAB4A and RAB5A. Involved in endocytic membrane fusion and membrane trafficking of recycling endosomes. Involved in KCNH1 channels trafficking to and from the cell membrane. Stimulates RABGEF1 mediated nucleotide exchange on RAB5A. Mediates the traffic of PKD1:PKD2 complex from the endoplasmic reticulum through the Golgi to the cilium.</text>
</comment>
<comment type="subunit">
    <text evidence="2 3 6">Heterodimer with RABGEF1. The heterodimer binds RAB4A and RAB5A that have been activated by GTP-binding. Interacts with TSC2 (By similarity). Interacts with GGA1 (via GAE domain), GGA2 (via GAE domain) and GGA3 (via GAE domain) (By similarity). Interacts with AP1G1 (via GAE domain) (By similarity). Interacts with AP1G2 (via GAE domain) (By similarity). Interacts with ECPAS (By similarity). Interacts with KCNH1 (By similarity). Interacts with PKD1 (via C-terminal domain) and GGA1; the interactions recruit PKD1:PKD2 complex to GGA1 and ARL3 at trans-Golgi network (By similarity). Interacts with KCNH1 (PubMed:22841712).</text>
</comment>
<comment type="interaction">
    <interactant intactId="EBI-7991542">
        <id>O35550</id>
    </interactant>
    <interactant intactId="EBI-7991592">
        <id>Q63472</id>
        <label>Kcnh1</label>
    </interactant>
    <organismsDiffer>false</organismsDiffer>
    <experiments>2</experiments>
</comment>
<comment type="subcellular location">
    <subcellularLocation>
        <location evidence="1">Cytoplasm</location>
    </subcellularLocation>
    <subcellularLocation>
        <location evidence="1">Early endosome</location>
    </subcellularLocation>
    <subcellularLocation>
        <location evidence="1">Recycling endosome</location>
    </subcellularLocation>
    <subcellularLocation>
        <location evidence="1">Cytoplasmic vesicle</location>
    </subcellularLocation>
</comment>
<comment type="PTM">
    <text evidence="1">Proteolytic cleavage by caspases in apoptotic cells causes loss of endosome fusion activity.</text>
</comment>
<comment type="similarity">
    <text evidence="7">Belongs to the rabaptin family.</text>
</comment>
<name>RABE1_RAT</name>
<organism>
    <name type="scientific">Rattus norvegicus</name>
    <name type="common">Rat</name>
    <dbReference type="NCBI Taxonomy" id="10116"/>
    <lineage>
        <taxon>Eukaryota</taxon>
        <taxon>Metazoa</taxon>
        <taxon>Chordata</taxon>
        <taxon>Craniata</taxon>
        <taxon>Vertebrata</taxon>
        <taxon>Euteleostomi</taxon>
        <taxon>Mammalia</taxon>
        <taxon>Eutheria</taxon>
        <taxon>Euarchontoglires</taxon>
        <taxon>Glires</taxon>
        <taxon>Rodentia</taxon>
        <taxon>Myomorpha</taxon>
        <taxon>Muroidea</taxon>
        <taxon>Muridae</taxon>
        <taxon>Murinae</taxon>
        <taxon>Rattus</taxon>
    </lineage>
</organism>